<sequence>MDRVEKYGLQIDAGLHRFLVEEAMPGTGVDADRFFSAFSDLVHDLGPKNRALLVKRDELQARLDGWYREHGAPVDMEAYEAFLREIGYLLPEGPDFYVSTANVDSEIATIAGPQLVVPVMNARYALNAANARWGSLYDALYGTDAIAETDGAERGKGYNPKRGAKVIAWAREFLDASAPLAAGRWSDAKSFSVEGATLTVTLADGTKSAPRNSVQFAGYAGDPAAPSEIVLRRNGLHIVIVLDATTPIGKADAAGISDVVLESAITTIMDCEDSIAAVDAEDKVLVYRNWLGLMKGDLEEEVTKGGRAFTRRLNPDRAYTAPDGATLTLPGRSLMLVRNVGHLMTNPAVLDRDGEEVPEGLMDAMVTALIALHDIGRNGRRANSRSGSMYVVKPKMHGPEEVAFACEIFARVEAALGLPANAMKMGIMDEERRTTVNLKECIRAARERVVFINTGFLDRTGDEIHTSMEAGPMIRKGDMKQAPWISAYENWNVDVGLECGLSGHAQIGKGMWAMPDLMAAMLEQKIVHPKAGANTAWVPSPTAATLHATHYHRVNVAEVQASLKSRTRAKLADILSVPVAARPNWTEEEIQRELDNNAQGILGYVVRWVDQGVGCSKVPDINNVGLMEDRATLRISAQHMANWLHHGIVSEAQIVETMQRMAAIVDGQNAGDPNYQPMAGRFEESIAFQAALDLVLKGREQPNGYTEPVLHRRRLELKAKQGA</sequence>
<comment type="function">
    <text evidence="1">Involved in the glycolate utilization. Catalyzes the condensation and subsequent hydrolysis of acetyl-coenzyme A (acetyl-CoA) and glyoxylate to form malate and CoA.</text>
</comment>
<comment type="catalytic activity">
    <reaction evidence="1">
        <text>glyoxylate + acetyl-CoA + H2O = (S)-malate + CoA + H(+)</text>
        <dbReference type="Rhea" id="RHEA:18181"/>
        <dbReference type="ChEBI" id="CHEBI:15377"/>
        <dbReference type="ChEBI" id="CHEBI:15378"/>
        <dbReference type="ChEBI" id="CHEBI:15589"/>
        <dbReference type="ChEBI" id="CHEBI:36655"/>
        <dbReference type="ChEBI" id="CHEBI:57287"/>
        <dbReference type="ChEBI" id="CHEBI:57288"/>
        <dbReference type="EC" id="2.3.3.9"/>
    </reaction>
</comment>
<comment type="cofactor">
    <cofactor evidence="1">
        <name>Mg(2+)</name>
        <dbReference type="ChEBI" id="CHEBI:18420"/>
    </cofactor>
</comment>
<comment type="pathway">
    <text evidence="1">Carbohydrate metabolism; glyoxylate cycle; (S)-malate from isocitrate: step 2/2.</text>
</comment>
<comment type="subunit">
    <text evidence="1">Monomer.</text>
</comment>
<comment type="subcellular location">
    <subcellularLocation>
        <location evidence="1">Cytoplasm</location>
    </subcellularLocation>
</comment>
<comment type="similarity">
    <text evidence="1">Belongs to the malate synthase family. GlcB subfamily.</text>
</comment>
<protein>
    <recommendedName>
        <fullName evidence="1">Malate synthase G</fullName>
        <ecNumber evidence="1">2.3.3.9</ecNumber>
    </recommendedName>
</protein>
<gene>
    <name evidence="1" type="primary">glcB</name>
    <name type="ordered locus">R00062</name>
    <name type="ORF">SMc02581</name>
</gene>
<name>MASZ_RHIME</name>
<dbReference type="EC" id="2.3.3.9" evidence="1"/>
<dbReference type="EMBL" id="AL591688">
    <property type="protein sequence ID" value="CAC41449.1"/>
    <property type="molecule type" value="Genomic_DNA"/>
</dbReference>
<dbReference type="RefSeq" id="NP_384168.1">
    <property type="nucleotide sequence ID" value="NC_003047.1"/>
</dbReference>
<dbReference type="RefSeq" id="WP_010968325.1">
    <property type="nucleotide sequence ID" value="NC_003047.1"/>
</dbReference>
<dbReference type="SMR" id="Q92TA4"/>
<dbReference type="EnsemblBacteria" id="CAC41449">
    <property type="protein sequence ID" value="CAC41449"/>
    <property type="gene ID" value="SMc02581"/>
</dbReference>
<dbReference type="KEGG" id="sme:SMc02581"/>
<dbReference type="PATRIC" id="fig|266834.11.peg.1416"/>
<dbReference type="eggNOG" id="COG2225">
    <property type="taxonomic scope" value="Bacteria"/>
</dbReference>
<dbReference type="HOGENOM" id="CLU_028446_1_0_5"/>
<dbReference type="OrthoDB" id="9762054at2"/>
<dbReference type="UniPathway" id="UPA00703">
    <property type="reaction ID" value="UER00720"/>
</dbReference>
<dbReference type="Proteomes" id="UP000001976">
    <property type="component" value="Chromosome"/>
</dbReference>
<dbReference type="GO" id="GO:0005829">
    <property type="term" value="C:cytosol"/>
    <property type="evidence" value="ECO:0007669"/>
    <property type="project" value="TreeGrafter"/>
</dbReference>
<dbReference type="GO" id="GO:0000287">
    <property type="term" value="F:magnesium ion binding"/>
    <property type="evidence" value="ECO:0007669"/>
    <property type="project" value="TreeGrafter"/>
</dbReference>
<dbReference type="GO" id="GO:0004474">
    <property type="term" value="F:malate synthase activity"/>
    <property type="evidence" value="ECO:0007669"/>
    <property type="project" value="UniProtKB-UniRule"/>
</dbReference>
<dbReference type="GO" id="GO:0009436">
    <property type="term" value="P:glyoxylate catabolic process"/>
    <property type="evidence" value="ECO:0007669"/>
    <property type="project" value="TreeGrafter"/>
</dbReference>
<dbReference type="GO" id="GO:0006097">
    <property type="term" value="P:glyoxylate cycle"/>
    <property type="evidence" value="ECO:0007669"/>
    <property type="project" value="UniProtKB-UniRule"/>
</dbReference>
<dbReference type="GO" id="GO:0006099">
    <property type="term" value="P:tricarboxylic acid cycle"/>
    <property type="evidence" value="ECO:0007669"/>
    <property type="project" value="UniProtKB-KW"/>
</dbReference>
<dbReference type="CDD" id="cd00728">
    <property type="entry name" value="malate_synt_G"/>
    <property type="match status" value="1"/>
</dbReference>
<dbReference type="FunFam" id="3.20.20.360:FF:000002">
    <property type="entry name" value="Malate synthase G"/>
    <property type="match status" value="1"/>
</dbReference>
<dbReference type="Gene3D" id="3.20.20.360">
    <property type="entry name" value="Malate synthase, domain 3"/>
    <property type="match status" value="2"/>
</dbReference>
<dbReference type="Gene3D" id="1.20.1220.12">
    <property type="entry name" value="Malate synthase, domain III"/>
    <property type="match status" value="1"/>
</dbReference>
<dbReference type="HAMAP" id="MF_00641">
    <property type="entry name" value="Malate_synth_G"/>
    <property type="match status" value="1"/>
</dbReference>
<dbReference type="InterPro" id="IPR044856">
    <property type="entry name" value="Malate_synth_C_sf"/>
</dbReference>
<dbReference type="InterPro" id="IPR011076">
    <property type="entry name" value="Malate_synth_sf"/>
</dbReference>
<dbReference type="InterPro" id="IPR001465">
    <property type="entry name" value="Malate_synthase_TIM"/>
</dbReference>
<dbReference type="InterPro" id="IPR006253">
    <property type="entry name" value="Malate_synthG"/>
</dbReference>
<dbReference type="InterPro" id="IPR048355">
    <property type="entry name" value="MS_C"/>
</dbReference>
<dbReference type="InterPro" id="IPR048356">
    <property type="entry name" value="MS_N"/>
</dbReference>
<dbReference type="InterPro" id="IPR046363">
    <property type="entry name" value="MS_N_TIM-barrel_dom"/>
</dbReference>
<dbReference type="InterPro" id="IPR048357">
    <property type="entry name" value="MSG_insertion"/>
</dbReference>
<dbReference type="NCBIfam" id="TIGR01345">
    <property type="entry name" value="malate_syn_G"/>
    <property type="match status" value="1"/>
</dbReference>
<dbReference type="NCBIfam" id="NF002825">
    <property type="entry name" value="PRK02999.1"/>
    <property type="match status" value="1"/>
</dbReference>
<dbReference type="PANTHER" id="PTHR42739">
    <property type="entry name" value="MALATE SYNTHASE G"/>
    <property type="match status" value="1"/>
</dbReference>
<dbReference type="PANTHER" id="PTHR42739:SF1">
    <property type="entry name" value="MALATE SYNTHASE G"/>
    <property type="match status" value="1"/>
</dbReference>
<dbReference type="Pfam" id="PF20659">
    <property type="entry name" value="MS_C"/>
    <property type="match status" value="1"/>
</dbReference>
<dbReference type="Pfam" id="PF20656">
    <property type="entry name" value="MS_N"/>
    <property type="match status" value="1"/>
</dbReference>
<dbReference type="Pfam" id="PF01274">
    <property type="entry name" value="MS_TIM-barrel"/>
    <property type="match status" value="1"/>
</dbReference>
<dbReference type="Pfam" id="PF20658">
    <property type="entry name" value="MSG_insertion"/>
    <property type="match status" value="1"/>
</dbReference>
<dbReference type="SUPFAM" id="SSF51645">
    <property type="entry name" value="Malate synthase G"/>
    <property type="match status" value="1"/>
</dbReference>
<organism>
    <name type="scientific">Rhizobium meliloti (strain 1021)</name>
    <name type="common">Ensifer meliloti</name>
    <name type="synonym">Sinorhizobium meliloti</name>
    <dbReference type="NCBI Taxonomy" id="266834"/>
    <lineage>
        <taxon>Bacteria</taxon>
        <taxon>Pseudomonadati</taxon>
        <taxon>Pseudomonadota</taxon>
        <taxon>Alphaproteobacteria</taxon>
        <taxon>Hyphomicrobiales</taxon>
        <taxon>Rhizobiaceae</taxon>
        <taxon>Sinorhizobium/Ensifer group</taxon>
        <taxon>Sinorhizobium</taxon>
    </lineage>
</organism>
<accession>Q92TA4</accession>
<feature type="chain" id="PRO_0000166898" description="Malate synthase G">
    <location>
        <begin position="1"/>
        <end position="723"/>
    </location>
</feature>
<feature type="active site" description="Proton acceptor" evidence="1">
    <location>
        <position position="338"/>
    </location>
</feature>
<feature type="active site" description="Proton donor" evidence="1">
    <location>
        <position position="629"/>
    </location>
</feature>
<feature type="binding site" evidence="1">
    <location>
        <position position="116"/>
    </location>
    <ligand>
        <name>acetyl-CoA</name>
        <dbReference type="ChEBI" id="CHEBI:57288"/>
    </ligand>
</feature>
<feature type="binding site" evidence="1">
    <location>
        <begin position="123"/>
        <end position="124"/>
    </location>
    <ligand>
        <name>acetyl-CoA</name>
        <dbReference type="ChEBI" id="CHEBI:57288"/>
    </ligand>
</feature>
<feature type="binding site" evidence="1">
    <location>
        <position position="274"/>
    </location>
    <ligand>
        <name>acetyl-CoA</name>
        <dbReference type="ChEBI" id="CHEBI:57288"/>
    </ligand>
</feature>
<feature type="binding site" evidence="1">
    <location>
        <position position="311"/>
    </location>
    <ligand>
        <name>acetyl-CoA</name>
        <dbReference type="ChEBI" id="CHEBI:57288"/>
    </ligand>
</feature>
<feature type="binding site" evidence="1">
    <location>
        <position position="338"/>
    </location>
    <ligand>
        <name>glyoxylate</name>
        <dbReference type="ChEBI" id="CHEBI:36655"/>
    </ligand>
</feature>
<feature type="binding site" evidence="1">
    <location>
        <position position="430"/>
    </location>
    <ligand>
        <name>glyoxylate</name>
        <dbReference type="ChEBI" id="CHEBI:36655"/>
    </ligand>
</feature>
<feature type="binding site" evidence="1">
    <location>
        <position position="430"/>
    </location>
    <ligand>
        <name>Mg(2+)</name>
        <dbReference type="ChEBI" id="CHEBI:18420"/>
    </ligand>
</feature>
<feature type="binding site" evidence="1">
    <location>
        <begin position="455"/>
        <end position="458"/>
    </location>
    <ligand>
        <name>glyoxylate</name>
        <dbReference type="ChEBI" id="CHEBI:36655"/>
    </ligand>
</feature>
<feature type="binding site" evidence="1">
    <location>
        <position position="458"/>
    </location>
    <ligand>
        <name>Mg(2+)</name>
        <dbReference type="ChEBI" id="CHEBI:18420"/>
    </ligand>
</feature>
<feature type="binding site" evidence="1">
    <location>
        <position position="539"/>
    </location>
    <ligand>
        <name>acetyl-CoA</name>
        <dbReference type="ChEBI" id="CHEBI:57288"/>
    </ligand>
</feature>
<feature type="modified residue" description="Cysteine sulfenic acid (-SOH)" evidence="1">
    <location>
        <position position="615"/>
    </location>
</feature>
<proteinExistence type="inferred from homology"/>
<keyword id="KW-0963">Cytoplasm</keyword>
<keyword id="KW-0329">Glyoxylate bypass</keyword>
<keyword id="KW-0460">Magnesium</keyword>
<keyword id="KW-0479">Metal-binding</keyword>
<keyword id="KW-0558">Oxidation</keyword>
<keyword id="KW-1185">Reference proteome</keyword>
<keyword id="KW-0808">Transferase</keyword>
<keyword id="KW-0816">Tricarboxylic acid cycle</keyword>
<evidence type="ECO:0000255" key="1">
    <source>
        <dbReference type="HAMAP-Rule" id="MF_00641"/>
    </source>
</evidence>
<reference key="1">
    <citation type="journal article" date="2001" name="Proc. Natl. Acad. Sci. U.S.A.">
        <title>Analysis of the chromosome sequence of the legume symbiont Sinorhizobium meliloti strain 1021.</title>
        <authorList>
            <person name="Capela D."/>
            <person name="Barloy-Hubler F."/>
            <person name="Gouzy J."/>
            <person name="Bothe G."/>
            <person name="Ampe F."/>
            <person name="Batut J."/>
            <person name="Boistard P."/>
            <person name="Becker A."/>
            <person name="Boutry M."/>
            <person name="Cadieu E."/>
            <person name="Dreano S."/>
            <person name="Gloux S."/>
            <person name="Godrie T."/>
            <person name="Goffeau A."/>
            <person name="Kahn D."/>
            <person name="Kiss E."/>
            <person name="Lelaure V."/>
            <person name="Masuy D."/>
            <person name="Pohl T."/>
            <person name="Portetelle D."/>
            <person name="Puehler A."/>
            <person name="Purnelle B."/>
            <person name="Ramsperger U."/>
            <person name="Renard C."/>
            <person name="Thebault P."/>
            <person name="Vandenbol M."/>
            <person name="Weidner S."/>
            <person name="Galibert F."/>
        </authorList>
    </citation>
    <scope>NUCLEOTIDE SEQUENCE [LARGE SCALE GENOMIC DNA]</scope>
    <source>
        <strain>1021</strain>
    </source>
</reference>
<reference key="2">
    <citation type="journal article" date="2001" name="Science">
        <title>The composite genome of the legume symbiont Sinorhizobium meliloti.</title>
        <authorList>
            <person name="Galibert F."/>
            <person name="Finan T.M."/>
            <person name="Long S.R."/>
            <person name="Puehler A."/>
            <person name="Abola P."/>
            <person name="Ampe F."/>
            <person name="Barloy-Hubler F."/>
            <person name="Barnett M.J."/>
            <person name="Becker A."/>
            <person name="Boistard P."/>
            <person name="Bothe G."/>
            <person name="Boutry M."/>
            <person name="Bowser L."/>
            <person name="Buhrmester J."/>
            <person name="Cadieu E."/>
            <person name="Capela D."/>
            <person name="Chain P."/>
            <person name="Cowie A."/>
            <person name="Davis R.W."/>
            <person name="Dreano S."/>
            <person name="Federspiel N.A."/>
            <person name="Fisher R.F."/>
            <person name="Gloux S."/>
            <person name="Godrie T."/>
            <person name="Goffeau A."/>
            <person name="Golding B."/>
            <person name="Gouzy J."/>
            <person name="Gurjal M."/>
            <person name="Hernandez-Lucas I."/>
            <person name="Hong A."/>
            <person name="Huizar L."/>
            <person name="Hyman R.W."/>
            <person name="Jones T."/>
            <person name="Kahn D."/>
            <person name="Kahn M.L."/>
            <person name="Kalman S."/>
            <person name="Keating D.H."/>
            <person name="Kiss E."/>
            <person name="Komp C."/>
            <person name="Lelaure V."/>
            <person name="Masuy D."/>
            <person name="Palm C."/>
            <person name="Peck M.C."/>
            <person name="Pohl T.M."/>
            <person name="Portetelle D."/>
            <person name="Purnelle B."/>
            <person name="Ramsperger U."/>
            <person name="Surzycki R."/>
            <person name="Thebault P."/>
            <person name="Vandenbol M."/>
            <person name="Vorhoelter F.J."/>
            <person name="Weidner S."/>
            <person name="Wells D.H."/>
            <person name="Wong K."/>
            <person name="Yeh K.-C."/>
            <person name="Batut J."/>
        </authorList>
    </citation>
    <scope>NUCLEOTIDE SEQUENCE [LARGE SCALE GENOMIC DNA]</scope>
    <source>
        <strain>1021</strain>
    </source>
</reference>